<dbReference type="EC" id="2.7.1.23" evidence="1"/>
<dbReference type="EMBL" id="CU928162">
    <property type="protein sequence ID" value="CAR09220.2"/>
    <property type="molecule type" value="Genomic_DNA"/>
</dbReference>
<dbReference type="RefSeq" id="WP_001059176.1">
    <property type="nucleotide sequence ID" value="NC_011745.1"/>
</dbReference>
<dbReference type="SMR" id="B7MYQ3"/>
<dbReference type="KEGG" id="ecq:ECED1_3053"/>
<dbReference type="HOGENOM" id="CLU_008831_0_1_6"/>
<dbReference type="Proteomes" id="UP000000748">
    <property type="component" value="Chromosome"/>
</dbReference>
<dbReference type="GO" id="GO:0005737">
    <property type="term" value="C:cytoplasm"/>
    <property type="evidence" value="ECO:0007669"/>
    <property type="project" value="UniProtKB-SubCell"/>
</dbReference>
<dbReference type="GO" id="GO:0005524">
    <property type="term" value="F:ATP binding"/>
    <property type="evidence" value="ECO:0007669"/>
    <property type="project" value="UniProtKB-KW"/>
</dbReference>
<dbReference type="GO" id="GO:0046872">
    <property type="term" value="F:metal ion binding"/>
    <property type="evidence" value="ECO:0007669"/>
    <property type="project" value="UniProtKB-UniRule"/>
</dbReference>
<dbReference type="GO" id="GO:0051287">
    <property type="term" value="F:NAD binding"/>
    <property type="evidence" value="ECO:0007669"/>
    <property type="project" value="UniProtKB-ARBA"/>
</dbReference>
<dbReference type="GO" id="GO:0003951">
    <property type="term" value="F:NAD+ kinase activity"/>
    <property type="evidence" value="ECO:0007669"/>
    <property type="project" value="UniProtKB-UniRule"/>
</dbReference>
<dbReference type="GO" id="GO:0019674">
    <property type="term" value="P:NAD metabolic process"/>
    <property type="evidence" value="ECO:0007669"/>
    <property type="project" value="InterPro"/>
</dbReference>
<dbReference type="GO" id="GO:0006741">
    <property type="term" value="P:NADP biosynthetic process"/>
    <property type="evidence" value="ECO:0007669"/>
    <property type="project" value="UniProtKB-UniRule"/>
</dbReference>
<dbReference type="FunFam" id="2.60.200.30:FF:000001">
    <property type="entry name" value="NAD kinase"/>
    <property type="match status" value="1"/>
</dbReference>
<dbReference type="FunFam" id="3.40.50.10330:FF:000004">
    <property type="entry name" value="NAD kinase"/>
    <property type="match status" value="1"/>
</dbReference>
<dbReference type="Gene3D" id="3.40.50.10330">
    <property type="entry name" value="Probable inorganic polyphosphate/atp-NAD kinase, domain 1"/>
    <property type="match status" value="1"/>
</dbReference>
<dbReference type="Gene3D" id="2.60.200.30">
    <property type="entry name" value="Probable inorganic polyphosphate/atp-NAD kinase, domain 2"/>
    <property type="match status" value="1"/>
</dbReference>
<dbReference type="HAMAP" id="MF_00361">
    <property type="entry name" value="NAD_kinase"/>
    <property type="match status" value="1"/>
</dbReference>
<dbReference type="InterPro" id="IPR017438">
    <property type="entry name" value="ATP-NAD_kinase_N"/>
</dbReference>
<dbReference type="InterPro" id="IPR017437">
    <property type="entry name" value="ATP-NAD_kinase_PpnK-typ_C"/>
</dbReference>
<dbReference type="InterPro" id="IPR016064">
    <property type="entry name" value="NAD/diacylglycerol_kinase_sf"/>
</dbReference>
<dbReference type="InterPro" id="IPR002504">
    <property type="entry name" value="NADK"/>
</dbReference>
<dbReference type="NCBIfam" id="NF002306">
    <property type="entry name" value="PRK01231.1"/>
    <property type="match status" value="1"/>
</dbReference>
<dbReference type="NCBIfam" id="NF002893">
    <property type="entry name" value="PRK03378.1"/>
    <property type="match status" value="1"/>
</dbReference>
<dbReference type="PANTHER" id="PTHR20275">
    <property type="entry name" value="NAD KINASE"/>
    <property type="match status" value="1"/>
</dbReference>
<dbReference type="PANTHER" id="PTHR20275:SF0">
    <property type="entry name" value="NAD KINASE"/>
    <property type="match status" value="1"/>
</dbReference>
<dbReference type="Pfam" id="PF01513">
    <property type="entry name" value="NAD_kinase"/>
    <property type="match status" value="1"/>
</dbReference>
<dbReference type="Pfam" id="PF20143">
    <property type="entry name" value="NAD_kinase_C"/>
    <property type="match status" value="1"/>
</dbReference>
<dbReference type="SUPFAM" id="SSF111331">
    <property type="entry name" value="NAD kinase/diacylglycerol kinase-like"/>
    <property type="match status" value="1"/>
</dbReference>
<feature type="chain" id="PRO_1000133572" description="NAD kinase">
    <location>
        <begin position="1"/>
        <end position="292"/>
    </location>
</feature>
<feature type="active site" description="Proton acceptor" evidence="1">
    <location>
        <position position="73"/>
    </location>
</feature>
<feature type="binding site" evidence="1">
    <location>
        <begin position="73"/>
        <end position="74"/>
    </location>
    <ligand>
        <name>NAD(+)</name>
        <dbReference type="ChEBI" id="CHEBI:57540"/>
    </ligand>
</feature>
<feature type="binding site" evidence="1">
    <location>
        <begin position="147"/>
        <end position="148"/>
    </location>
    <ligand>
        <name>NAD(+)</name>
        <dbReference type="ChEBI" id="CHEBI:57540"/>
    </ligand>
</feature>
<feature type="binding site" evidence="1">
    <location>
        <position position="158"/>
    </location>
    <ligand>
        <name>NAD(+)</name>
        <dbReference type="ChEBI" id="CHEBI:57540"/>
    </ligand>
</feature>
<feature type="binding site" evidence="1">
    <location>
        <position position="175"/>
    </location>
    <ligand>
        <name>NAD(+)</name>
        <dbReference type="ChEBI" id="CHEBI:57540"/>
    </ligand>
</feature>
<feature type="binding site" evidence="1">
    <location>
        <position position="177"/>
    </location>
    <ligand>
        <name>NAD(+)</name>
        <dbReference type="ChEBI" id="CHEBI:57540"/>
    </ligand>
</feature>
<feature type="binding site" evidence="1">
    <location>
        <begin position="188"/>
        <end position="193"/>
    </location>
    <ligand>
        <name>NAD(+)</name>
        <dbReference type="ChEBI" id="CHEBI:57540"/>
    </ligand>
</feature>
<feature type="binding site" evidence="1">
    <location>
        <position position="247"/>
    </location>
    <ligand>
        <name>NAD(+)</name>
        <dbReference type="ChEBI" id="CHEBI:57540"/>
    </ligand>
</feature>
<name>NADK_ECO81</name>
<gene>
    <name evidence="1" type="primary">nadK</name>
    <name type="ordered locus">ECED1_3053</name>
</gene>
<protein>
    <recommendedName>
        <fullName evidence="1">NAD kinase</fullName>
        <ecNumber evidence="1">2.7.1.23</ecNumber>
    </recommendedName>
    <alternativeName>
        <fullName evidence="1">ATP-dependent NAD kinase</fullName>
    </alternativeName>
</protein>
<sequence length="292" mass="32581">MNNHFKCIGIVGHPRHPTALTTHEMLYRWLCTKGYEVIVEQQIAHELQLKNVKTGTLAEIGQQADLAVVVGGDGNMLGAARTLARYDIKVIGINRGNLGFLTDLDPDNAQQQLADVLEGHYISEKRFLLEAQVCQQDCQKRISTAINEVVLHPGKVAHMIEFEVYIDEIFAFSQRSDGLIISTPTGSTAYSLSAGGPILTPSLDAITLVPMFPHTLSARPLVINSSSTIRLRFSHRRNDLEISCDSQIALPIQEGEDVLIRRCDYHLNLIHPKDYSYFNTLSTKLGWSKKLF</sequence>
<evidence type="ECO:0000255" key="1">
    <source>
        <dbReference type="HAMAP-Rule" id="MF_00361"/>
    </source>
</evidence>
<organism>
    <name type="scientific">Escherichia coli O81 (strain ED1a)</name>
    <dbReference type="NCBI Taxonomy" id="585397"/>
    <lineage>
        <taxon>Bacteria</taxon>
        <taxon>Pseudomonadati</taxon>
        <taxon>Pseudomonadota</taxon>
        <taxon>Gammaproteobacteria</taxon>
        <taxon>Enterobacterales</taxon>
        <taxon>Enterobacteriaceae</taxon>
        <taxon>Escherichia</taxon>
    </lineage>
</organism>
<reference key="1">
    <citation type="journal article" date="2009" name="PLoS Genet.">
        <title>Organised genome dynamics in the Escherichia coli species results in highly diverse adaptive paths.</title>
        <authorList>
            <person name="Touchon M."/>
            <person name="Hoede C."/>
            <person name="Tenaillon O."/>
            <person name="Barbe V."/>
            <person name="Baeriswyl S."/>
            <person name="Bidet P."/>
            <person name="Bingen E."/>
            <person name="Bonacorsi S."/>
            <person name="Bouchier C."/>
            <person name="Bouvet O."/>
            <person name="Calteau A."/>
            <person name="Chiapello H."/>
            <person name="Clermont O."/>
            <person name="Cruveiller S."/>
            <person name="Danchin A."/>
            <person name="Diard M."/>
            <person name="Dossat C."/>
            <person name="Karoui M.E."/>
            <person name="Frapy E."/>
            <person name="Garry L."/>
            <person name="Ghigo J.M."/>
            <person name="Gilles A.M."/>
            <person name="Johnson J."/>
            <person name="Le Bouguenec C."/>
            <person name="Lescat M."/>
            <person name="Mangenot S."/>
            <person name="Martinez-Jehanne V."/>
            <person name="Matic I."/>
            <person name="Nassif X."/>
            <person name="Oztas S."/>
            <person name="Petit M.A."/>
            <person name="Pichon C."/>
            <person name="Rouy Z."/>
            <person name="Ruf C.S."/>
            <person name="Schneider D."/>
            <person name="Tourret J."/>
            <person name="Vacherie B."/>
            <person name="Vallenet D."/>
            <person name="Medigue C."/>
            <person name="Rocha E.P.C."/>
            <person name="Denamur E."/>
        </authorList>
    </citation>
    <scope>NUCLEOTIDE SEQUENCE [LARGE SCALE GENOMIC DNA]</scope>
    <source>
        <strain>ED1a</strain>
    </source>
</reference>
<comment type="function">
    <text evidence="1">Involved in the regulation of the intracellular balance of NAD and NADP, and is a key enzyme in the biosynthesis of NADP. Catalyzes specifically the phosphorylation on 2'-hydroxyl of the adenosine moiety of NAD to yield NADP.</text>
</comment>
<comment type="catalytic activity">
    <reaction evidence="1">
        <text>NAD(+) + ATP = ADP + NADP(+) + H(+)</text>
        <dbReference type="Rhea" id="RHEA:18629"/>
        <dbReference type="ChEBI" id="CHEBI:15378"/>
        <dbReference type="ChEBI" id="CHEBI:30616"/>
        <dbReference type="ChEBI" id="CHEBI:57540"/>
        <dbReference type="ChEBI" id="CHEBI:58349"/>
        <dbReference type="ChEBI" id="CHEBI:456216"/>
        <dbReference type="EC" id="2.7.1.23"/>
    </reaction>
</comment>
<comment type="cofactor">
    <cofactor evidence="1">
        <name>a divalent metal cation</name>
        <dbReference type="ChEBI" id="CHEBI:60240"/>
    </cofactor>
</comment>
<comment type="subcellular location">
    <subcellularLocation>
        <location evidence="1">Cytoplasm</location>
    </subcellularLocation>
</comment>
<comment type="similarity">
    <text evidence="1">Belongs to the NAD kinase family.</text>
</comment>
<proteinExistence type="inferred from homology"/>
<keyword id="KW-0067">ATP-binding</keyword>
<keyword id="KW-0963">Cytoplasm</keyword>
<keyword id="KW-0418">Kinase</keyword>
<keyword id="KW-0520">NAD</keyword>
<keyword id="KW-0521">NADP</keyword>
<keyword id="KW-0547">Nucleotide-binding</keyword>
<keyword id="KW-0808">Transferase</keyword>
<accession>B7MYQ3</accession>